<feature type="chain" id="PRO_0000113106" description="Aspartate carbamoyltransferase catalytic subunit">
    <location>
        <begin position="1"/>
        <end position="317"/>
    </location>
</feature>
<feature type="binding site" evidence="1">
    <location>
        <position position="65"/>
    </location>
    <ligand>
        <name>carbamoyl phosphate</name>
        <dbReference type="ChEBI" id="CHEBI:58228"/>
    </ligand>
</feature>
<feature type="binding site" evidence="1">
    <location>
        <position position="66"/>
    </location>
    <ligand>
        <name>carbamoyl phosphate</name>
        <dbReference type="ChEBI" id="CHEBI:58228"/>
    </ligand>
</feature>
<feature type="binding site" evidence="1">
    <location>
        <position position="93"/>
    </location>
    <ligand>
        <name>L-aspartate</name>
        <dbReference type="ChEBI" id="CHEBI:29991"/>
    </ligand>
</feature>
<feature type="binding site" evidence="1">
    <location>
        <position position="115"/>
    </location>
    <ligand>
        <name>carbamoyl phosphate</name>
        <dbReference type="ChEBI" id="CHEBI:58228"/>
    </ligand>
</feature>
<feature type="binding site" evidence="1">
    <location>
        <position position="145"/>
    </location>
    <ligand>
        <name>carbamoyl phosphate</name>
        <dbReference type="ChEBI" id="CHEBI:58228"/>
    </ligand>
</feature>
<feature type="binding site" evidence="1">
    <location>
        <position position="148"/>
    </location>
    <ligand>
        <name>carbamoyl phosphate</name>
        <dbReference type="ChEBI" id="CHEBI:58228"/>
    </ligand>
</feature>
<feature type="binding site" evidence="1">
    <location>
        <position position="178"/>
    </location>
    <ligand>
        <name>L-aspartate</name>
        <dbReference type="ChEBI" id="CHEBI:29991"/>
    </ligand>
</feature>
<feature type="binding site" evidence="1">
    <location>
        <position position="233"/>
    </location>
    <ligand>
        <name>L-aspartate</name>
        <dbReference type="ChEBI" id="CHEBI:29991"/>
    </ligand>
</feature>
<feature type="binding site" evidence="1">
    <location>
        <position position="274"/>
    </location>
    <ligand>
        <name>carbamoyl phosphate</name>
        <dbReference type="ChEBI" id="CHEBI:58228"/>
    </ligand>
</feature>
<feature type="binding site" evidence="1">
    <location>
        <position position="275"/>
    </location>
    <ligand>
        <name>carbamoyl phosphate</name>
        <dbReference type="ChEBI" id="CHEBI:58228"/>
    </ligand>
</feature>
<organism>
    <name type="scientific">Bordetella pertussis (strain Tohama I / ATCC BAA-589 / NCTC 13251)</name>
    <dbReference type="NCBI Taxonomy" id="257313"/>
    <lineage>
        <taxon>Bacteria</taxon>
        <taxon>Pseudomonadati</taxon>
        <taxon>Pseudomonadota</taxon>
        <taxon>Betaproteobacteria</taxon>
        <taxon>Burkholderiales</taxon>
        <taxon>Alcaligenaceae</taxon>
        <taxon>Bordetella</taxon>
    </lineage>
</organism>
<sequence length="317" mass="34362">MLNPQLNRHGELIHLLSTEGLPRRIIEQILDLAATFVPAPGQEFPKLPLLHGKSVFNLFFENSTRTRTTFEIAAKRLSADVVNLNIAASSTSKGESLLDTIANLSAMQADLFVVRHGASGAPYLIAQHVAPHVHVINAGDGRHAHPTQALLDMYTIRHHKGDFNQLTVAIVGDVLHSRVARSDIHALTTLGVPEVRVVAPATLLPEGLAQMGVRVCTDMEEGLRDADVVIMLRLQNERMRGALLPSAHEYFKHYGLTQARLALARPDAIVMHPGPMNRGVEIASEVADSGQAVILDQVTFGIAVRMAAMSLVAGVRP</sequence>
<accession>Q7W044</accession>
<name>PYRB_BORPE</name>
<protein>
    <recommendedName>
        <fullName evidence="1">Aspartate carbamoyltransferase catalytic subunit</fullName>
        <ecNumber evidence="1">2.1.3.2</ecNumber>
    </recommendedName>
    <alternativeName>
        <fullName evidence="1">Aspartate transcarbamylase</fullName>
        <shortName evidence="1">ATCase</shortName>
    </alternativeName>
</protein>
<dbReference type="EC" id="2.1.3.2" evidence="1"/>
<dbReference type="EMBL" id="BX640411">
    <property type="protein sequence ID" value="CAE40698.1"/>
    <property type="molecule type" value="Genomic_DNA"/>
</dbReference>
<dbReference type="RefSeq" id="NP_879196.1">
    <property type="nucleotide sequence ID" value="NC_002929.2"/>
</dbReference>
<dbReference type="RefSeq" id="WP_003820560.1">
    <property type="nucleotide sequence ID" value="NZ_CP039022.1"/>
</dbReference>
<dbReference type="SMR" id="Q7W044"/>
<dbReference type="STRING" id="257313.BP0321"/>
<dbReference type="PaxDb" id="257313-BP0321"/>
<dbReference type="KEGG" id="bpe:BP0321"/>
<dbReference type="PATRIC" id="fig|257313.5.peg.347"/>
<dbReference type="eggNOG" id="COG0540">
    <property type="taxonomic scope" value="Bacteria"/>
</dbReference>
<dbReference type="HOGENOM" id="CLU_043846_2_0_4"/>
<dbReference type="UniPathway" id="UPA00070">
    <property type="reaction ID" value="UER00116"/>
</dbReference>
<dbReference type="Proteomes" id="UP000002676">
    <property type="component" value="Chromosome"/>
</dbReference>
<dbReference type="GO" id="GO:0005829">
    <property type="term" value="C:cytosol"/>
    <property type="evidence" value="ECO:0007669"/>
    <property type="project" value="TreeGrafter"/>
</dbReference>
<dbReference type="GO" id="GO:0016597">
    <property type="term" value="F:amino acid binding"/>
    <property type="evidence" value="ECO:0007669"/>
    <property type="project" value="InterPro"/>
</dbReference>
<dbReference type="GO" id="GO:0004070">
    <property type="term" value="F:aspartate carbamoyltransferase activity"/>
    <property type="evidence" value="ECO:0007669"/>
    <property type="project" value="UniProtKB-UniRule"/>
</dbReference>
<dbReference type="GO" id="GO:0006207">
    <property type="term" value="P:'de novo' pyrimidine nucleobase biosynthetic process"/>
    <property type="evidence" value="ECO:0007669"/>
    <property type="project" value="InterPro"/>
</dbReference>
<dbReference type="GO" id="GO:0044205">
    <property type="term" value="P:'de novo' UMP biosynthetic process"/>
    <property type="evidence" value="ECO:0007669"/>
    <property type="project" value="UniProtKB-UniRule"/>
</dbReference>
<dbReference type="GO" id="GO:0006520">
    <property type="term" value="P:amino acid metabolic process"/>
    <property type="evidence" value="ECO:0007669"/>
    <property type="project" value="InterPro"/>
</dbReference>
<dbReference type="FunFam" id="3.40.50.1370:FF:000007">
    <property type="entry name" value="Aspartate carbamoyltransferase"/>
    <property type="match status" value="1"/>
</dbReference>
<dbReference type="Gene3D" id="3.40.50.1370">
    <property type="entry name" value="Aspartate/ornithine carbamoyltransferase"/>
    <property type="match status" value="2"/>
</dbReference>
<dbReference type="HAMAP" id="MF_00001">
    <property type="entry name" value="Asp_carb_tr"/>
    <property type="match status" value="1"/>
</dbReference>
<dbReference type="InterPro" id="IPR006132">
    <property type="entry name" value="Asp/Orn_carbamoyltranf_P-bd"/>
</dbReference>
<dbReference type="InterPro" id="IPR006130">
    <property type="entry name" value="Asp/Orn_carbamoylTrfase"/>
</dbReference>
<dbReference type="InterPro" id="IPR036901">
    <property type="entry name" value="Asp/Orn_carbamoylTrfase_sf"/>
</dbReference>
<dbReference type="InterPro" id="IPR002082">
    <property type="entry name" value="Asp_carbamoyltransf"/>
</dbReference>
<dbReference type="InterPro" id="IPR006131">
    <property type="entry name" value="Asp_carbamoyltransf_Asp/Orn-bd"/>
</dbReference>
<dbReference type="NCBIfam" id="TIGR00670">
    <property type="entry name" value="asp_carb_tr"/>
    <property type="match status" value="1"/>
</dbReference>
<dbReference type="NCBIfam" id="NF002032">
    <property type="entry name" value="PRK00856.1"/>
    <property type="match status" value="1"/>
</dbReference>
<dbReference type="PANTHER" id="PTHR45753:SF6">
    <property type="entry name" value="ASPARTATE CARBAMOYLTRANSFERASE"/>
    <property type="match status" value="1"/>
</dbReference>
<dbReference type="PANTHER" id="PTHR45753">
    <property type="entry name" value="ORNITHINE CARBAMOYLTRANSFERASE, MITOCHONDRIAL"/>
    <property type="match status" value="1"/>
</dbReference>
<dbReference type="Pfam" id="PF00185">
    <property type="entry name" value="OTCace"/>
    <property type="match status" value="1"/>
</dbReference>
<dbReference type="Pfam" id="PF02729">
    <property type="entry name" value="OTCace_N"/>
    <property type="match status" value="1"/>
</dbReference>
<dbReference type="PRINTS" id="PR00100">
    <property type="entry name" value="AOTCASE"/>
</dbReference>
<dbReference type="PRINTS" id="PR00101">
    <property type="entry name" value="ATCASE"/>
</dbReference>
<dbReference type="SUPFAM" id="SSF53671">
    <property type="entry name" value="Aspartate/ornithine carbamoyltransferase"/>
    <property type="match status" value="1"/>
</dbReference>
<dbReference type="PROSITE" id="PS00097">
    <property type="entry name" value="CARBAMOYLTRANSFERASE"/>
    <property type="match status" value="1"/>
</dbReference>
<evidence type="ECO:0000255" key="1">
    <source>
        <dbReference type="HAMAP-Rule" id="MF_00001"/>
    </source>
</evidence>
<reference key="1">
    <citation type="journal article" date="2003" name="Nat. Genet.">
        <title>Comparative analysis of the genome sequences of Bordetella pertussis, Bordetella parapertussis and Bordetella bronchiseptica.</title>
        <authorList>
            <person name="Parkhill J."/>
            <person name="Sebaihia M."/>
            <person name="Preston A."/>
            <person name="Murphy L.D."/>
            <person name="Thomson N.R."/>
            <person name="Harris D.E."/>
            <person name="Holden M.T.G."/>
            <person name="Churcher C.M."/>
            <person name="Bentley S.D."/>
            <person name="Mungall K.L."/>
            <person name="Cerdeno-Tarraga A.-M."/>
            <person name="Temple L."/>
            <person name="James K.D."/>
            <person name="Harris B."/>
            <person name="Quail M.A."/>
            <person name="Achtman M."/>
            <person name="Atkin R."/>
            <person name="Baker S."/>
            <person name="Basham D."/>
            <person name="Bason N."/>
            <person name="Cherevach I."/>
            <person name="Chillingworth T."/>
            <person name="Collins M."/>
            <person name="Cronin A."/>
            <person name="Davis P."/>
            <person name="Doggett J."/>
            <person name="Feltwell T."/>
            <person name="Goble A."/>
            <person name="Hamlin N."/>
            <person name="Hauser H."/>
            <person name="Holroyd S."/>
            <person name="Jagels K."/>
            <person name="Leather S."/>
            <person name="Moule S."/>
            <person name="Norberczak H."/>
            <person name="O'Neil S."/>
            <person name="Ormond D."/>
            <person name="Price C."/>
            <person name="Rabbinowitsch E."/>
            <person name="Rutter S."/>
            <person name="Sanders M."/>
            <person name="Saunders D."/>
            <person name="Seeger K."/>
            <person name="Sharp S."/>
            <person name="Simmonds M."/>
            <person name="Skelton J."/>
            <person name="Squares R."/>
            <person name="Squares S."/>
            <person name="Stevens K."/>
            <person name="Unwin L."/>
            <person name="Whitehead S."/>
            <person name="Barrell B.G."/>
            <person name="Maskell D.J."/>
        </authorList>
    </citation>
    <scope>NUCLEOTIDE SEQUENCE [LARGE SCALE GENOMIC DNA]</scope>
    <source>
        <strain>Tohama I / ATCC BAA-589 / NCTC 13251</strain>
    </source>
</reference>
<comment type="function">
    <text evidence="1">Catalyzes the condensation of carbamoyl phosphate and aspartate to form carbamoyl aspartate and inorganic phosphate, the committed step in the de novo pyrimidine nucleotide biosynthesis pathway.</text>
</comment>
<comment type="catalytic activity">
    <reaction evidence="1">
        <text>carbamoyl phosphate + L-aspartate = N-carbamoyl-L-aspartate + phosphate + H(+)</text>
        <dbReference type="Rhea" id="RHEA:20013"/>
        <dbReference type="ChEBI" id="CHEBI:15378"/>
        <dbReference type="ChEBI" id="CHEBI:29991"/>
        <dbReference type="ChEBI" id="CHEBI:32814"/>
        <dbReference type="ChEBI" id="CHEBI:43474"/>
        <dbReference type="ChEBI" id="CHEBI:58228"/>
        <dbReference type="EC" id="2.1.3.2"/>
    </reaction>
</comment>
<comment type="pathway">
    <text evidence="1">Pyrimidine metabolism; UMP biosynthesis via de novo pathway; (S)-dihydroorotate from bicarbonate: step 2/3.</text>
</comment>
<comment type="subunit">
    <text evidence="1">Heterododecamer (2C3:3R2) of six catalytic PyrB chains organized as two trimers (C3), and six regulatory PyrI chains organized as three dimers (R2).</text>
</comment>
<comment type="similarity">
    <text evidence="1">Belongs to the aspartate/ornithine carbamoyltransferase superfamily. ATCase family.</text>
</comment>
<keyword id="KW-0665">Pyrimidine biosynthesis</keyword>
<keyword id="KW-1185">Reference proteome</keyword>
<keyword id="KW-0808">Transferase</keyword>
<proteinExistence type="inferred from homology"/>
<gene>
    <name evidence="1" type="primary">pyrB</name>
    <name type="ordered locus">BP0321</name>
</gene>